<feature type="chain" id="PRO_0000326656" description="Acylphosphatase">
    <location>
        <begin position="1"/>
        <end position="90"/>
    </location>
</feature>
<feature type="domain" description="Acylphosphatase-like" evidence="1">
    <location>
        <begin position="3"/>
        <end position="90"/>
    </location>
</feature>
<feature type="active site" evidence="1">
    <location>
        <position position="18"/>
    </location>
</feature>
<feature type="active site" evidence="1">
    <location>
        <position position="36"/>
    </location>
</feature>
<gene>
    <name type="primary">acyP</name>
    <name type="ordered locus">RBAM_007840</name>
</gene>
<organism>
    <name type="scientific">Bacillus velezensis (strain DSM 23117 / BGSC 10A6 / LMG 26770 / FZB42)</name>
    <name type="common">Bacillus amyloliquefaciens subsp. plantarum</name>
    <dbReference type="NCBI Taxonomy" id="326423"/>
    <lineage>
        <taxon>Bacteria</taxon>
        <taxon>Bacillati</taxon>
        <taxon>Bacillota</taxon>
        <taxon>Bacilli</taxon>
        <taxon>Bacillales</taxon>
        <taxon>Bacillaceae</taxon>
        <taxon>Bacillus</taxon>
        <taxon>Bacillus amyloliquefaciens group</taxon>
    </lineage>
</organism>
<name>ACYP_BACVZ</name>
<sequence>MLQYHMIADGRVQGVGFRYFVQMEADRHKVAGWVKNRDDGRVEILAEGPEESLKQFAEAVRKGSPFSNVTGVTIEESHRLKGYRTFSISY</sequence>
<evidence type="ECO:0000255" key="1">
    <source>
        <dbReference type="PROSITE-ProRule" id="PRU00520"/>
    </source>
</evidence>
<evidence type="ECO:0000305" key="2"/>
<proteinExistence type="inferred from homology"/>
<accession>A7Z2E2</accession>
<protein>
    <recommendedName>
        <fullName>Acylphosphatase</fullName>
        <ecNumber>3.6.1.7</ecNumber>
    </recommendedName>
    <alternativeName>
        <fullName>Acylphosphate phosphohydrolase</fullName>
    </alternativeName>
</protein>
<keyword id="KW-0378">Hydrolase</keyword>
<reference key="1">
    <citation type="journal article" date="2007" name="Nat. Biotechnol.">
        <title>Comparative analysis of the complete genome sequence of the plant growth-promoting bacterium Bacillus amyloliquefaciens FZB42.</title>
        <authorList>
            <person name="Chen X.H."/>
            <person name="Koumoutsi A."/>
            <person name="Scholz R."/>
            <person name="Eisenreich A."/>
            <person name="Schneider K."/>
            <person name="Heinemeyer I."/>
            <person name="Morgenstern B."/>
            <person name="Voss B."/>
            <person name="Hess W.R."/>
            <person name="Reva O."/>
            <person name="Junge H."/>
            <person name="Voigt B."/>
            <person name="Jungblut P.R."/>
            <person name="Vater J."/>
            <person name="Suessmuth R."/>
            <person name="Liesegang H."/>
            <person name="Strittmatter A."/>
            <person name="Gottschalk G."/>
            <person name="Borriss R."/>
        </authorList>
    </citation>
    <scope>NUCLEOTIDE SEQUENCE [LARGE SCALE GENOMIC DNA]</scope>
    <source>
        <strain>DSM 23117 / BGSC 10A6 / LMG 26770 / FZB42</strain>
    </source>
</reference>
<comment type="catalytic activity">
    <reaction>
        <text>an acyl phosphate + H2O = a carboxylate + phosphate + H(+)</text>
        <dbReference type="Rhea" id="RHEA:14965"/>
        <dbReference type="ChEBI" id="CHEBI:15377"/>
        <dbReference type="ChEBI" id="CHEBI:15378"/>
        <dbReference type="ChEBI" id="CHEBI:29067"/>
        <dbReference type="ChEBI" id="CHEBI:43474"/>
        <dbReference type="ChEBI" id="CHEBI:59918"/>
        <dbReference type="EC" id="3.6.1.7"/>
    </reaction>
</comment>
<comment type="similarity">
    <text evidence="2">Belongs to the acylphosphatase family.</text>
</comment>
<dbReference type="EC" id="3.6.1.7"/>
<dbReference type="EMBL" id="CP000560">
    <property type="protein sequence ID" value="ABS73168.1"/>
    <property type="molecule type" value="Genomic_DNA"/>
</dbReference>
<dbReference type="RefSeq" id="WP_012117064.1">
    <property type="nucleotide sequence ID" value="NC_009725.2"/>
</dbReference>
<dbReference type="SMR" id="A7Z2E2"/>
<dbReference type="GeneID" id="93079918"/>
<dbReference type="KEGG" id="bay:RBAM_007840"/>
<dbReference type="HOGENOM" id="CLU_141932_2_0_9"/>
<dbReference type="Proteomes" id="UP000001120">
    <property type="component" value="Chromosome"/>
</dbReference>
<dbReference type="GO" id="GO:0003998">
    <property type="term" value="F:acylphosphatase activity"/>
    <property type="evidence" value="ECO:0007669"/>
    <property type="project" value="UniProtKB-EC"/>
</dbReference>
<dbReference type="Gene3D" id="3.30.70.100">
    <property type="match status" value="1"/>
</dbReference>
<dbReference type="InterPro" id="IPR020456">
    <property type="entry name" value="Acylphosphatase"/>
</dbReference>
<dbReference type="InterPro" id="IPR001792">
    <property type="entry name" value="Acylphosphatase-like_dom"/>
</dbReference>
<dbReference type="InterPro" id="IPR036046">
    <property type="entry name" value="Acylphosphatase-like_dom_sf"/>
</dbReference>
<dbReference type="InterPro" id="IPR017968">
    <property type="entry name" value="Acylphosphatase_CS"/>
</dbReference>
<dbReference type="NCBIfam" id="NF010995">
    <property type="entry name" value="PRK14420.1"/>
    <property type="match status" value="1"/>
</dbReference>
<dbReference type="PANTHER" id="PTHR47268">
    <property type="entry name" value="ACYLPHOSPHATASE"/>
    <property type="match status" value="1"/>
</dbReference>
<dbReference type="PANTHER" id="PTHR47268:SF4">
    <property type="entry name" value="ACYLPHOSPHATASE"/>
    <property type="match status" value="1"/>
</dbReference>
<dbReference type="Pfam" id="PF00708">
    <property type="entry name" value="Acylphosphatase"/>
    <property type="match status" value="1"/>
</dbReference>
<dbReference type="PRINTS" id="PR00112">
    <property type="entry name" value="ACYLPHPHTASE"/>
</dbReference>
<dbReference type="SUPFAM" id="SSF54975">
    <property type="entry name" value="Acylphosphatase/BLUF domain-like"/>
    <property type="match status" value="1"/>
</dbReference>
<dbReference type="PROSITE" id="PS00151">
    <property type="entry name" value="ACYLPHOSPHATASE_2"/>
    <property type="match status" value="1"/>
</dbReference>
<dbReference type="PROSITE" id="PS51160">
    <property type="entry name" value="ACYLPHOSPHATASE_3"/>
    <property type="match status" value="1"/>
</dbReference>